<proteinExistence type="evidence at transcript level"/>
<organism>
    <name type="scientific">Macaca fascicularis</name>
    <name type="common">Crab-eating macaque</name>
    <name type="synonym">Cynomolgus monkey</name>
    <dbReference type="NCBI Taxonomy" id="9541"/>
    <lineage>
        <taxon>Eukaryota</taxon>
        <taxon>Metazoa</taxon>
        <taxon>Chordata</taxon>
        <taxon>Craniata</taxon>
        <taxon>Vertebrata</taxon>
        <taxon>Euteleostomi</taxon>
        <taxon>Mammalia</taxon>
        <taxon>Eutheria</taxon>
        <taxon>Euarchontoglires</taxon>
        <taxon>Primates</taxon>
        <taxon>Haplorrhini</taxon>
        <taxon>Catarrhini</taxon>
        <taxon>Cercopithecidae</taxon>
        <taxon>Cercopithecinae</taxon>
        <taxon>Macaca</taxon>
    </lineage>
</organism>
<comment type="function">
    <text evidence="1 2">Assembles a suppression complex (suppresome) by tethering SIRT1 and MDM2 to regulate composite modifications of p53/TP53. Confers both deacetylation-mediated functional inactivation, by SIRT1, and ubiquitination-dependent degradation, by MDM2, of p53/TP53, promoting a proliferative and cell survival behaviors (By similarity). May play a role in the regulation of spermatogenesis (By similarity).</text>
</comment>
<comment type="subunit">
    <text evidence="1 2">Interacts with MEIG1 (By similarity). Interacts with TP53, MDM2 and SIRT1; the interactions mediate post-transcriptional modifications of TP53 by MDM2 and SIRT1 (By similarity).</text>
</comment>
<comment type="subcellular location">
    <subcellularLocation>
        <location evidence="2">Cytoplasmic vesicle</location>
        <location evidence="2">Secretory vesicle</location>
        <location evidence="2">Acrosome</location>
    </subcellularLocation>
    <text evidence="2">Localized in the acrosome in germ cells throughout spermiogenesis, it is also present in the manchette of elongating spermatids.</text>
</comment>
<protein>
    <recommendedName>
        <fullName>MORN repeat-containing protein 3</fullName>
    </recommendedName>
</protein>
<evidence type="ECO:0000250" key="1">
    <source>
        <dbReference type="UniProtKB" id="Q6PF18"/>
    </source>
</evidence>
<evidence type="ECO:0000250" key="2">
    <source>
        <dbReference type="UniProtKB" id="Q8C5T4"/>
    </source>
</evidence>
<accession>Q4R842</accession>
<keyword id="KW-0968">Cytoplasmic vesicle</keyword>
<keyword id="KW-1185">Reference proteome</keyword>
<keyword id="KW-0677">Repeat</keyword>
<name>MORN3_MACFA</name>
<sequence length="240" mass="27625">MPVSKCPKKSESLWKGWDRKAQKNGLRRQVYAVNGDYYVGEWKDNVKHGKGTQVWKKNGAIYEGDWKFGKRDGYGTLSLPDQQTGKCRRVYSGWWKGDKKSGYGIQFFGPKEYYEGEWCGSQRSGWGRMYYSNGDIYEGQWENDKPNGDGMLRLKNGNRYEGCWERGMKNGLGRFFHLDHGQLFEGFWVDNMAKCGTMIDFGRDEAPEPTQFPIPEVKILDPDGVLAQALAMFKKTEEGD</sequence>
<reference key="1">
    <citation type="submission" date="2005-06" db="EMBL/GenBank/DDBJ databases">
        <title>DNA sequences of macaque genes expressed in brain or testis and its evolutionary implications.</title>
        <authorList>
            <consortium name="International consortium for macaque cDNA sequencing and analysis"/>
        </authorList>
    </citation>
    <scope>NUCLEOTIDE SEQUENCE [LARGE SCALE MRNA]</scope>
    <source>
        <tissue>Testis</tissue>
    </source>
</reference>
<gene>
    <name type="primary">MORN3</name>
    <name type="ORF">QtsA-13509</name>
</gene>
<feature type="chain" id="PRO_0000247460" description="MORN repeat-containing protein 3">
    <location>
        <begin position="1"/>
        <end position="240"/>
    </location>
</feature>
<feature type="repeat" description="MORN 1">
    <location>
        <begin position="38"/>
        <end position="60"/>
    </location>
</feature>
<feature type="repeat" description="MORN 2">
    <location>
        <begin position="62"/>
        <end position="84"/>
    </location>
</feature>
<feature type="repeat" description="MORN 3">
    <location>
        <begin position="91"/>
        <end position="113"/>
    </location>
</feature>
<feature type="repeat" description="MORN 4">
    <location>
        <begin position="114"/>
        <end position="136"/>
    </location>
</feature>
<feature type="repeat" description="MORN 5">
    <location>
        <begin position="137"/>
        <end position="159"/>
    </location>
</feature>
<feature type="repeat" description="MORN 6">
    <location>
        <begin position="160"/>
        <end position="182"/>
    </location>
</feature>
<feature type="repeat" description="MORN 7">
    <location>
        <begin position="184"/>
        <end position="205"/>
    </location>
</feature>
<feature type="region of interest" description="Interaction with MDM2" evidence="1">
    <location>
        <begin position="6"/>
        <end position="35"/>
    </location>
</feature>
<feature type="region of interest" description="Interaction with SIRT1" evidence="1">
    <location>
        <begin position="76"/>
        <end position="100"/>
    </location>
</feature>
<feature type="region of interest" description="Interaction with TP53" evidence="1">
    <location>
        <begin position="206"/>
        <end position="240"/>
    </location>
</feature>
<dbReference type="EMBL" id="AB168617">
    <property type="protein sequence ID" value="BAE00730.1"/>
    <property type="molecule type" value="mRNA"/>
</dbReference>
<dbReference type="RefSeq" id="NP_001270721.1">
    <property type="nucleotide sequence ID" value="NM_001283792.1"/>
</dbReference>
<dbReference type="SMR" id="Q4R842"/>
<dbReference type="STRING" id="9541.ENSMFAP00000027823"/>
<dbReference type="eggNOG" id="KOG0231">
    <property type="taxonomic scope" value="Eukaryota"/>
</dbReference>
<dbReference type="Proteomes" id="UP000233100">
    <property type="component" value="Unplaced"/>
</dbReference>
<dbReference type="GO" id="GO:0001669">
    <property type="term" value="C:acrosomal vesicle"/>
    <property type="evidence" value="ECO:0007669"/>
    <property type="project" value="UniProtKB-SubCell"/>
</dbReference>
<dbReference type="FunFam" id="2.20.110.10:FF:000020">
    <property type="entry name" value="MORN repeat containing 3"/>
    <property type="match status" value="1"/>
</dbReference>
<dbReference type="FunFam" id="2.20.110.10:FF:000026">
    <property type="entry name" value="MORN repeat containing 3"/>
    <property type="match status" value="1"/>
</dbReference>
<dbReference type="FunFam" id="2.20.110.10:FF:000018">
    <property type="entry name" value="MORN repeat-containing protein 3"/>
    <property type="match status" value="1"/>
</dbReference>
<dbReference type="Gene3D" id="2.20.110.10">
    <property type="entry name" value="Histone H3 K4-specific methyltransferase SET7/9 N-terminal domain"/>
    <property type="match status" value="3"/>
</dbReference>
<dbReference type="InterPro" id="IPR003409">
    <property type="entry name" value="MORN"/>
</dbReference>
<dbReference type="InterPro" id="IPR052472">
    <property type="entry name" value="MORN3"/>
</dbReference>
<dbReference type="PANTHER" id="PTHR46511">
    <property type="entry name" value="MORN REPEAT-CONTAINING PROTEIN 3"/>
    <property type="match status" value="1"/>
</dbReference>
<dbReference type="PANTHER" id="PTHR46511:SF1">
    <property type="entry name" value="MORN REPEAT-CONTAINING PROTEIN 3"/>
    <property type="match status" value="1"/>
</dbReference>
<dbReference type="Pfam" id="PF02493">
    <property type="entry name" value="MORN"/>
    <property type="match status" value="5"/>
</dbReference>
<dbReference type="SMART" id="SM00698">
    <property type="entry name" value="MORN"/>
    <property type="match status" value="6"/>
</dbReference>
<dbReference type="SUPFAM" id="SSF82185">
    <property type="entry name" value="Histone H3 K4-specific methyltransferase SET7/9 N-terminal domain"/>
    <property type="match status" value="2"/>
</dbReference>